<dbReference type="EC" id="7.1.1.9"/>
<dbReference type="EMBL" id="D38115">
    <property type="protein sequence ID" value="BAA85289.1"/>
    <property type="molecule type" value="Genomic_DNA"/>
</dbReference>
<dbReference type="SMR" id="Q9T9X6"/>
<dbReference type="KEGG" id="ppyg:807901"/>
<dbReference type="CTD" id="4514"/>
<dbReference type="GO" id="GO:0005743">
    <property type="term" value="C:mitochondrial inner membrane"/>
    <property type="evidence" value="ECO:0007669"/>
    <property type="project" value="UniProtKB-SubCell"/>
</dbReference>
<dbReference type="GO" id="GO:0045277">
    <property type="term" value="C:respiratory chain complex IV"/>
    <property type="evidence" value="ECO:0000250"/>
    <property type="project" value="UniProtKB"/>
</dbReference>
<dbReference type="GO" id="GO:0004129">
    <property type="term" value="F:cytochrome-c oxidase activity"/>
    <property type="evidence" value="ECO:0007669"/>
    <property type="project" value="UniProtKB-EC"/>
</dbReference>
<dbReference type="GO" id="GO:0006123">
    <property type="term" value="P:mitochondrial electron transport, cytochrome c to oxygen"/>
    <property type="evidence" value="ECO:0007669"/>
    <property type="project" value="TreeGrafter"/>
</dbReference>
<dbReference type="GO" id="GO:0008535">
    <property type="term" value="P:respiratory chain complex IV assembly"/>
    <property type="evidence" value="ECO:0000250"/>
    <property type="project" value="UniProtKB"/>
</dbReference>
<dbReference type="CDD" id="cd01665">
    <property type="entry name" value="Cyt_c_Oxidase_III"/>
    <property type="match status" value="1"/>
</dbReference>
<dbReference type="FunFam" id="1.10.287.70:FF:000048">
    <property type="entry name" value="Cytochrome c oxidase subunit 3"/>
    <property type="match status" value="1"/>
</dbReference>
<dbReference type="FunFam" id="1.20.120.80:FF:000002">
    <property type="entry name" value="Cytochrome c oxidase subunit 3"/>
    <property type="match status" value="1"/>
</dbReference>
<dbReference type="Gene3D" id="1.10.287.70">
    <property type="match status" value="1"/>
</dbReference>
<dbReference type="Gene3D" id="1.20.120.80">
    <property type="entry name" value="Cytochrome c oxidase, subunit III, four-helix bundle"/>
    <property type="match status" value="1"/>
</dbReference>
<dbReference type="InterPro" id="IPR024791">
    <property type="entry name" value="Cyt_c/ubiquinol_Oxase_su3"/>
</dbReference>
<dbReference type="InterPro" id="IPR033945">
    <property type="entry name" value="Cyt_c_oxase_su3_dom"/>
</dbReference>
<dbReference type="InterPro" id="IPR000298">
    <property type="entry name" value="Cyt_c_oxidase-like_su3"/>
</dbReference>
<dbReference type="InterPro" id="IPR035973">
    <property type="entry name" value="Cyt_c_oxidase_su3-like_sf"/>
</dbReference>
<dbReference type="InterPro" id="IPR013833">
    <property type="entry name" value="Cyt_c_oxidase_su3_a-hlx"/>
</dbReference>
<dbReference type="PANTHER" id="PTHR11403:SF7">
    <property type="entry name" value="CYTOCHROME C OXIDASE SUBUNIT 3"/>
    <property type="match status" value="1"/>
</dbReference>
<dbReference type="PANTHER" id="PTHR11403">
    <property type="entry name" value="CYTOCHROME C OXIDASE SUBUNIT III"/>
    <property type="match status" value="1"/>
</dbReference>
<dbReference type="Pfam" id="PF00510">
    <property type="entry name" value="COX3"/>
    <property type="match status" value="1"/>
</dbReference>
<dbReference type="SUPFAM" id="SSF81452">
    <property type="entry name" value="Cytochrome c oxidase subunit III-like"/>
    <property type="match status" value="1"/>
</dbReference>
<dbReference type="PROSITE" id="PS50253">
    <property type="entry name" value="COX3"/>
    <property type="match status" value="1"/>
</dbReference>
<accession>Q9T9X6</accession>
<comment type="function">
    <text evidence="2">Component of the cytochrome c oxidase, the last enzyme in the mitochondrial electron transport chain which drives oxidative phosphorylation. The respiratory chain contains 3 multisubunit complexes succinate dehydrogenase (complex II, CII), ubiquinol-cytochrome c oxidoreductase (cytochrome b-c1 complex, complex III, CIII) and cytochrome c oxidase (complex IV, CIV), that cooperate to transfer electrons derived from NADH and succinate to molecular oxygen, creating an electrochemical gradient over the inner membrane that drives transmembrane transport and the ATP synthase. Cytochrome c oxidase is the component of the respiratory chain that catalyzes the reduction of oxygen to water. Electrons originating from reduced cytochrome c in the intermembrane space (IMS) are transferred via the dinuclear copper A center (CU(A)) of subunit 2 and heme A of subunit 1 to the active site in subunit 1, a binuclear center (BNC) formed by heme A3 and copper B (CU(B)). The BNC reduces molecular oxygen to 2 water molecules using 4 electrons from cytochrome c in the IMS and 4 protons from the mitochondrial matrix.</text>
</comment>
<comment type="catalytic activity">
    <reaction evidence="2">
        <text>4 Fe(II)-[cytochrome c] + O2 + 8 H(+)(in) = 4 Fe(III)-[cytochrome c] + 2 H2O + 4 H(+)(out)</text>
        <dbReference type="Rhea" id="RHEA:11436"/>
        <dbReference type="Rhea" id="RHEA-COMP:10350"/>
        <dbReference type="Rhea" id="RHEA-COMP:14399"/>
        <dbReference type="ChEBI" id="CHEBI:15377"/>
        <dbReference type="ChEBI" id="CHEBI:15378"/>
        <dbReference type="ChEBI" id="CHEBI:15379"/>
        <dbReference type="ChEBI" id="CHEBI:29033"/>
        <dbReference type="ChEBI" id="CHEBI:29034"/>
        <dbReference type="EC" id="7.1.1.9"/>
    </reaction>
    <physiologicalReaction direction="left-to-right" evidence="2">
        <dbReference type="Rhea" id="RHEA:11437"/>
    </physiologicalReaction>
</comment>
<comment type="subunit">
    <text evidence="1">Component of the cytochrome c oxidase (complex IV, CIV), a multisubunit enzyme composed of 14 subunits. The complex is composed of a catalytic core of 3 subunits MT-CO1, MT-CO2 and MT-CO3, encoded in the mitochondrial DNA, and 11 supernumerary subunits COX4I, COX5A, COX5B, COX6A, COX6B, COX6C, COX7A, COX7B, COX7C, COX8 and NDUFA4, which are encoded in the nuclear genome. The complex exists as a monomer or a dimer and forms supercomplexes (SCs) in the inner mitochondrial membrane with NADH-ubiquinone oxidoreductase (complex I, CI) and ubiquinol-cytochrome c oxidoreductase (cytochrome b-c1 complex, complex III, CIII), resulting in different assemblies (supercomplex SCI(1)III(2)IV(1) and megacomplex MCI(2)III(2)IV(2)).</text>
</comment>
<comment type="subcellular location">
    <subcellularLocation>
        <location evidence="1">Mitochondrion inner membrane</location>
        <topology evidence="1">Multi-pass membrane protein</topology>
    </subcellularLocation>
</comment>
<comment type="similarity">
    <text evidence="3">Belongs to the cytochrome c oxidase subunit 3 family.</text>
</comment>
<feature type="chain" id="PRO_0000183838" description="Cytochrome c oxidase subunit 3">
    <location>
        <begin position="1"/>
        <end position="261"/>
    </location>
</feature>
<feature type="topological domain" description="Mitochondrial matrix" evidence="1">
    <location>
        <begin position="1"/>
        <end position="15"/>
    </location>
</feature>
<feature type="transmembrane region" description="Helical; Name=I" evidence="1">
    <location>
        <begin position="16"/>
        <end position="34"/>
    </location>
</feature>
<feature type="topological domain" description="Mitochondrial intermembrane" evidence="1">
    <location>
        <begin position="35"/>
        <end position="40"/>
    </location>
</feature>
<feature type="transmembrane region" description="Helical; Name=II" evidence="1">
    <location>
        <begin position="41"/>
        <end position="66"/>
    </location>
</feature>
<feature type="topological domain" description="Mitochondrial matrix" evidence="1">
    <location>
        <begin position="67"/>
        <end position="72"/>
    </location>
</feature>
<feature type="transmembrane region" description="Helical; Name=III" evidence="1">
    <location>
        <begin position="73"/>
        <end position="105"/>
    </location>
</feature>
<feature type="topological domain" description="Mitochondrial intermembrane" evidence="1">
    <location>
        <begin position="106"/>
        <end position="128"/>
    </location>
</feature>
<feature type="transmembrane region" description="Helical; Name=IV" evidence="1">
    <location>
        <begin position="129"/>
        <end position="152"/>
    </location>
</feature>
<feature type="topological domain" description="Mitochondrial matrix" evidence="1">
    <location>
        <begin position="153"/>
        <end position="155"/>
    </location>
</feature>
<feature type="transmembrane region" description="Helical; Name=V" evidence="1">
    <location>
        <begin position="156"/>
        <end position="183"/>
    </location>
</feature>
<feature type="topological domain" description="Mitochondrial intermembrane" evidence="1">
    <location>
        <begin position="184"/>
        <end position="190"/>
    </location>
</feature>
<feature type="transmembrane region" description="Helical; Name=VI" evidence="1">
    <location>
        <begin position="191"/>
        <end position="223"/>
    </location>
</feature>
<feature type="topological domain" description="Mitochondrial matrix" evidence="1">
    <location>
        <begin position="224"/>
        <end position="232"/>
    </location>
</feature>
<feature type="transmembrane region" description="Helical; Name=VII" evidence="1">
    <location>
        <begin position="233"/>
        <end position="256"/>
    </location>
</feature>
<feature type="topological domain" description="Mitochondrial intermembrane" evidence="1">
    <location>
        <begin position="257"/>
        <end position="261"/>
    </location>
</feature>
<sequence length="261" mass="29743">MVHQSHAYHMLKPSPWPLTGALSALLMTSGLAMWFHFHSTTLLLTGMLTNALTMYQWWRDVVRESTYQGHHTLPVQKGLRYGMILFITSEVFFFAGFFWAFYHSSLAPTPQLGGHWPPTGITPLNPLEVPLLNTAVLLASGVSITWAHHSLMENNRTQMIQALLITILLGIYFTLLQASEYIEAPFTISDGIYGSTFFMTTGFHGLHVIIGSTFLTVCLSCQLLFHFTSKHHFGFEAAAWYWHFVDVVWLFLYVSIYWWGS</sequence>
<proteinExistence type="inferred from homology"/>
<protein>
    <recommendedName>
        <fullName>Cytochrome c oxidase subunit 3</fullName>
        <ecNumber>7.1.1.9</ecNumber>
    </recommendedName>
    <alternativeName>
        <fullName>Cytochrome c oxidase polypeptide III</fullName>
    </alternativeName>
</protein>
<organism>
    <name type="scientific">Pongo pygmaeus</name>
    <name type="common">Bornean orangutan</name>
    <dbReference type="NCBI Taxonomy" id="9600"/>
    <lineage>
        <taxon>Eukaryota</taxon>
        <taxon>Metazoa</taxon>
        <taxon>Chordata</taxon>
        <taxon>Craniata</taxon>
        <taxon>Vertebrata</taxon>
        <taxon>Euteleostomi</taxon>
        <taxon>Mammalia</taxon>
        <taxon>Eutheria</taxon>
        <taxon>Euarchontoglires</taxon>
        <taxon>Primates</taxon>
        <taxon>Haplorrhini</taxon>
        <taxon>Catarrhini</taxon>
        <taxon>Hominidae</taxon>
        <taxon>Pongo</taxon>
    </lineage>
</organism>
<keyword id="KW-0472">Membrane</keyword>
<keyword id="KW-0496">Mitochondrion</keyword>
<keyword id="KW-0999">Mitochondrion inner membrane</keyword>
<keyword id="KW-1278">Translocase</keyword>
<keyword id="KW-0812">Transmembrane</keyword>
<keyword id="KW-1133">Transmembrane helix</keyword>
<geneLocation type="mitochondrion"/>
<reference key="1">
    <citation type="journal article" date="1995" name="Proc. Natl. Acad. Sci. U.S.A.">
        <title>Recent African origin of modern humans revealed by complete sequences of hominoid mitochondrial DNAs.</title>
        <authorList>
            <person name="Horai S."/>
            <person name="Hayasaka K."/>
            <person name="Kondo R."/>
            <person name="Tsugane K."/>
            <person name="Takahata N."/>
        </authorList>
    </citation>
    <scope>NUCLEOTIDE SEQUENCE [GENOMIC DNA]</scope>
</reference>
<evidence type="ECO:0000250" key="1">
    <source>
        <dbReference type="UniProtKB" id="P00415"/>
    </source>
</evidence>
<evidence type="ECO:0000250" key="2">
    <source>
        <dbReference type="UniProtKB" id="P00420"/>
    </source>
</evidence>
<evidence type="ECO:0000305" key="3"/>
<name>COX3_PONPY</name>
<gene>
    <name type="primary">MT-CO3</name>
    <name type="synonym">COIII</name>
    <name type="synonym">COXIII</name>
    <name type="synonym">MTCO3</name>
</gene>